<comment type="function">
    <text evidence="1">E3 ubiquitin ligase that plays a role in several processes including innate antiviral immnity, cell migration and chemotaxis. Acts as a 'Lys-63'-specific ubiquitin ligase for MAPK1/ERK2 and MAPK3/ERK1, promoting their activation by facilitating their interaction with MAP2K1 and MAP2K2. Also plays a role in cell migration and chemotaxis by acting as a stable focal adhesion component upon recruitment by multi-adapter protein paxillin/PXN. Functions in the RIGI-mediated interferon induction pathway upstream or at the level of MAVS. Inhibits NF-kappa-B activation by turnover of 'Lys-63'-linked ubiquitination of MAP3K7/TAK1. Mechanistically, prevents TRIM8 cytoplasmic translocation and thus inhibits TRIM8-mediated 'Lys-63'-linked polyubiquitination of MAP3K7/TAK1 in the cytoplasm. Also has an important regulatory effect on the activation of hepatic stellate cells (HSCs).</text>
</comment>
<comment type="catalytic activity">
    <reaction evidence="1">
        <text>S-ubiquitinyl-[E2 ubiquitin-conjugating enzyme]-L-cysteine + [acceptor protein]-L-lysine = [E2 ubiquitin-conjugating enzyme]-L-cysteine + N(6)-ubiquitinyl-[acceptor protein]-L-lysine.</text>
        <dbReference type="EC" id="2.3.2.27"/>
    </reaction>
</comment>
<comment type="subunit">
    <text evidence="1">Interacts with paxillin/PXN; this interaction recruits TRIM15 to focal adhesions. Interacts with TRIM8; this interaction prevents TRIM8 cytoplasmic translocation.</text>
</comment>
<comment type="subcellular location">
    <subcellularLocation>
        <location evidence="1">Cytoplasm</location>
    </subcellularLocation>
    <subcellularLocation>
        <location evidence="1">Nucleus</location>
    </subcellularLocation>
    <subcellularLocation>
        <location evidence="1">Cell junction</location>
        <location evidence="1">Focal adhesion</location>
    </subcellularLocation>
    <text evidence="1">Localizes to focal adhesions during the early stage of adhesion biogenesis.</text>
</comment>
<comment type="similarity">
    <text evidence="6">Belongs to the TRIM/RBCC family.</text>
</comment>
<evidence type="ECO:0000250" key="1">
    <source>
        <dbReference type="UniProtKB" id="Q9C019"/>
    </source>
</evidence>
<evidence type="ECO:0000255" key="2"/>
<evidence type="ECO:0000255" key="3">
    <source>
        <dbReference type="PROSITE-ProRule" id="PRU00024"/>
    </source>
</evidence>
<evidence type="ECO:0000255" key="4">
    <source>
        <dbReference type="PROSITE-ProRule" id="PRU00175"/>
    </source>
</evidence>
<evidence type="ECO:0000255" key="5">
    <source>
        <dbReference type="PROSITE-ProRule" id="PRU00548"/>
    </source>
</evidence>
<evidence type="ECO:0000305" key="6"/>
<dbReference type="EC" id="2.3.2.27" evidence="1"/>
<dbReference type="EMBL" id="AJ251829">
    <property type="protein sequence ID" value="CAB63933.1"/>
    <property type="molecule type" value="Genomic_DNA"/>
</dbReference>
<dbReference type="RefSeq" id="NP_001116680.1">
    <property type="nucleotide sequence ID" value="NM_001123208.1"/>
</dbReference>
<dbReference type="SMR" id="Q9TSW0"/>
<dbReference type="FunCoup" id="Q9TSW0">
    <property type="interactions" value="66"/>
</dbReference>
<dbReference type="STRING" id="9823.ENSSSCP00000062771"/>
<dbReference type="PaxDb" id="9823-ENSSSCP00000001314"/>
<dbReference type="Ensembl" id="ENSSSCT00000080618.2">
    <property type="protein sequence ID" value="ENSSSCP00000073963.1"/>
    <property type="gene ID" value="ENSSSCG00000001235.7"/>
</dbReference>
<dbReference type="Ensembl" id="ENSSSCT00025037781.1">
    <property type="protein sequence ID" value="ENSSSCP00025015883.1"/>
    <property type="gene ID" value="ENSSSCG00025027873.1"/>
</dbReference>
<dbReference type="Ensembl" id="ENSSSCT00045037467.1">
    <property type="protein sequence ID" value="ENSSSCP00045026043.1"/>
    <property type="gene ID" value="ENSSSCG00045021870.1"/>
</dbReference>
<dbReference type="Ensembl" id="ENSSSCT00050106144.1">
    <property type="protein sequence ID" value="ENSSSCP00050046840.1"/>
    <property type="gene ID" value="ENSSSCG00050077143.1"/>
</dbReference>
<dbReference type="Ensembl" id="ENSSSCT00055061315.1">
    <property type="protein sequence ID" value="ENSSSCP00055049181.1"/>
    <property type="gene ID" value="ENSSSCG00055030740.1"/>
</dbReference>
<dbReference type="Ensembl" id="ENSSSCT00110031881">
    <property type="protein sequence ID" value="ENSSSCP00110021584"/>
    <property type="gene ID" value="ENSSSCG00110016715"/>
</dbReference>
<dbReference type="Ensembl" id="ENSSSCT00115016203">
    <property type="protein sequence ID" value="ENSSSCP00115015279"/>
    <property type="gene ID" value="ENSSSCG00115009411"/>
</dbReference>
<dbReference type="GeneID" id="100144461"/>
<dbReference type="KEGG" id="ssc:100144461"/>
<dbReference type="CTD" id="89870"/>
<dbReference type="VGNC" id="VGNC:94395">
    <property type="gene designation" value="TRIM15"/>
</dbReference>
<dbReference type="eggNOG" id="KOG2177">
    <property type="taxonomic scope" value="Eukaryota"/>
</dbReference>
<dbReference type="GeneTree" id="ENSGT00940000162589"/>
<dbReference type="HOGENOM" id="CLU_013137_0_3_1"/>
<dbReference type="InParanoid" id="Q9TSW0"/>
<dbReference type="OMA" id="EDTKCRE"/>
<dbReference type="OrthoDB" id="9428588at2759"/>
<dbReference type="TreeFam" id="TF342569"/>
<dbReference type="Proteomes" id="UP000008227">
    <property type="component" value="Chromosome 7"/>
</dbReference>
<dbReference type="Proteomes" id="UP000314985">
    <property type="component" value="Unplaced"/>
</dbReference>
<dbReference type="Proteomes" id="UP000694570">
    <property type="component" value="Unplaced"/>
</dbReference>
<dbReference type="Proteomes" id="UP000694571">
    <property type="component" value="Unplaced"/>
</dbReference>
<dbReference type="Proteomes" id="UP000694720">
    <property type="component" value="Unplaced"/>
</dbReference>
<dbReference type="Proteomes" id="UP000694722">
    <property type="component" value="Unplaced"/>
</dbReference>
<dbReference type="Proteomes" id="UP000694723">
    <property type="component" value="Unplaced"/>
</dbReference>
<dbReference type="Proteomes" id="UP000694724">
    <property type="component" value="Unplaced"/>
</dbReference>
<dbReference type="Proteomes" id="UP000694725">
    <property type="component" value="Unplaced"/>
</dbReference>
<dbReference type="Proteomes" id="UP000694726">
    <property type="component" value="Unplaced"/>
</dbReference>
<dbReference type="Proteomes" id="UP000694727">
    <property type="component" value="Unplaced"/>
</dbReference>
<dbReference type="Proteomes" id="UP000694728">
    <property type="component" value="Unplaced"/>
</dbReference>
<dbReference type="Bgee" id="ENSSSCG00000001235">
    <property type="expression patterns" value="Expressed in epididymis and 10 other cell types or tissues"/>
</dbReference>
<dbReference type="ExpressionAtlas" id="Q9TSW0">
    <property type="expression patterns" value="baseline and differential"/>
</dbReference>
<dbReference type="GO" id="GO:0005737">
    <property type="term" value="C:cytoplasm"/>
    <property type="evidence" value="ECO:0000318"/>
    <property type="project" value="GO_Central"/>
</dbReference>
<dbReference type="GO" id="GO:0005925">
    <property type="term" value="C:focal adhesion"/>
    <property type="evidence" value="ECO:0007669"/>
    <property type="project" value="UniProtKB-SubCell"/>
</dbReference>
<dbReference type="GO" id="GO:0005634">
    <property type="term" value="C:nucleus"/>
    <property type="evidence" value="ECO:0007669"/>
    <property type="project" value="UniProtKB-SubCell"/>
</dbReference>
<dbReference type="GO" id="GO:0140313">
    <property type="term" value="F:molecular sequestering activity"/>
    <property type="evidence" value="ECO:0007669"/>
    <property type="project" value="Ensembl"/>
</dbReference>
<dbReference type="GO" id="GO:0003713">
    <property type="term" value="F:transcription coactivator activity"/>
    <property type="evidence" value="ECO:0007669"/>
    <property type="project" value="Ensembl"/>
</dbReference>
<dbReference type="GO" id="GO:0061630">
    <property type="term" value="F:ubiquitin protein ligase activity"/>
    <property type="evidence" value="ECO:0000318"/>
    <property type="project" value="GO_Central"/>
</dbReference>
<dbReference type="GO" id="GO:0008270">
    <property type="term" value="F:zinc ion binding"/>
    <property type="evidence" value="ECO:0007669"/>
    <property type="project" value="UniProtKB-KW"/>
</dbReference>
<dbReference type="GO" id="GO:0045087">
    <property type="term" value="P:innate immune response"/>
    <property type="evidence" value="ECO:0000318"/>
    <property type="project" value="GO_Central"/>
</dbReference>
<dbReference type="GO" id="GO:1901253">
    <property type="term" value="P:negative regulation of intracellular transport of viral material"/>
    <property type="evidence" value="ECO:0007669"/>
    <property type="project" value="Ensembl"/>
</dbReference>
<dbReference type="GO" id="GO:1901223">
    <property type="term" value="P:negative regulation of non-canonical NF-kappaB signal transduction"/>
    <property type="evidence" value="ECO:0007669"/>
    <property type="project" value="Ensembl"/>
</dbReference>
<dbReference type="GO" id="GO:1900246">
    <property type="term" value="P:positive regulation of RIG-I signaling pathway"/>
    <property type="evidence" value="ECO:0007669"/>
    <property type="project" value="Ensembl"/>
</dbReference>
<dbReference type="GO" id="GO:0032481">
    <property type="term" value="P:positive regulation of type I interferon production"/>
    <property type="evidence" value="ECO:0007669"/>
    <property type="project" value="Ensembl"/>
</dbReference>
<dbReference type="GO" id="GO:0044790">
    <property type="term" value="P:suppression of viral release by host"/>
    <property type="evidence" value="ECO:0007669"/>
    <property type="project" value="Ensembl"/>
</dbReference>
<dbReference type="CDD" id="cd15826">
    <property type="entry name" value="SPRY_PRY_TRIM15"/>
    <property type="match status" value="1"/>
</dbReference>
<dbReference type="FunFam" id="3.30.160.60:FF:002334">
    <property type="entry name" value="Tripartite motif containing 15"/>
    <property type="match status" value="1"/>
</dbReference>
<dbReference type="FunFam" id="2.60.120.920:FF:000044">
    <property type="entry name" value="Tripartite motif-containing protein 10"/>
    <property type="match status" value="1"/>
</dbReference>
<dbReference type="Gene3D" id="2.60.120.920">
    <property type="match status" value="1"/>
</dbReference>
<dbReference type="Gene3D" id="3.30.160.60">
    <property type="entry name" value="Classic Zinc Finger"/>
    <property type="match status" value="1"/>
</dbReference>
<dbReference type="Gene3D" id="3.30.40.10">
    <property type="entry name" value="Zinc/RING finger domain, C3HC4 (zinc finger)"/>
    <property type="match status" value="1"/>
</dbReference>
<dbReference type="InterPro" id="IPR001870">
    <property type="entry name" value="B30.2/SPRY"/>
</dbReference>
<dbReference type="InterPro" id="IPR043136">
    <property type="entry name" value="B30.2/SPRY_sf"/>
</dbReference>
<dbReference type="InterPro" id="IPR003879">
    <property type="entry name" value="Butyrophylin_SPRY"/>
</dbReference>
<dbReference type="InterPro" id="IPR013320">
    <property type="entry name" value="ConA-like_dom_sf"/>
</dbReference>
<dbReference type="InterPro" id="IPR006574">
    <property type="entry name" value="PRY"/>
</dbReference>
<dbReference type="InterPro" id="IPR003877">
    <property type="entry name" value="SPRY_dom"/>
</dbReference>
<dbReference type="InterPro" id="IPR050143">
    <property type="entry name" value="TRIM/RBCC"/>
</dbReference>
<dbReference type="InterPro" id="IPR000315">
    <property type="entry name" value="Znf_B-box"/>
</dbReference>
<dbReference type="InterPro" id="IPR018957">
    <property type="entry name" value="Znf_C3HC4_RING-type"/>
</dbReference>
<dbReference type="InterPro" id="IPR001841">
    <property type="entry name" value="Znf_RING"/>
</dbReference>
<dbReference type="InterPro" id="IPR013083">
    <property type="entry name" value="Znf_RING/FYVE/PHD"/>
</dbReference>
<dbReference type="InterPro" id="IPR017907">
    <property type="entry name" value="Znf_RING_CS"/>
</dbReference>
<dbReference type="PANTHER" id="PTHR24103">
    <property type="entry name" value="E3 UBIQUITIN-PROTEIN LIGASE TRIM"/>
    <property type="match status" value="1"/>
</dbReference>
<dbReference type="Pfam" id="PF13765">
    <property type="entry name" value="PRY"/>
    <property type="match status" value="1"/>
</dbReference>
<dbReference type="Pfam" id="PF00622">
    <property type="entry name" value="SPRY"/>
    <property type="match status" value="1"/>
</dbReference>
<dbReference type="Pfam" id="PF00643">
    <property type="entry name" value="zf-B_box"/>
    <property type="match status" value="1"/>
</dbReference>
<dbReference type="Pfam" id="PF00097">
    <property type="entry name" value="zf-C3HC4"/>
    <property type="match status" value="1"/>
</dbReference>
<dbReference type="PRINTS" id="PR01407">
    <property type="entry name" value="BUTYPHLNCDUF"/>
</dbReference>
<dbReference type="SMART" id="SM00336">
    <property type="entry name" value="BBOX"/>
    <property type="match status" value="1"/>
</dbReference>
<dbReference type="SMART" id="SM00589">
    <property type="entry name" value="PRY"/>
    <property type="match status" value="1"/>
</dbReference>
<dbReference type="SMART" id="SM00184">
    <property type="entry name" value="RING"/>
    <property type="match status" value="1"/>
</dbReference>
<dbReference type="SMART" id="SM00449">
    <property type="entry name" value="SPRY"/>
    <property type="match status" value="1"/>
</dbReference>
<dbReference type="SUPFAM" id="SSF57845">
    <property type="entry name" value="B-box zinc-binding domain"/>
    <property type="match status" value="1"/>
</dbReference>
<dbReference type="SUPFAM" id="SSF49899">
    <property type="entry name" value="Concanavalin A-like lectins/glucanases"/>
    <property type="match status" value="1"/>
</dbReference>
<dbReference type="SUPFAM" id="SSF57850">
    <property type="entry name" value="RING/U-box"/>
    <property type="match status" value="1"/>
</dbReference>
<dbReference type="PROSITE" id="PS50188">
    <property type="entry name" value="B302_SPRY"/>
    <property type="match status" value="1"/>
</dbReference>
<dbReference type="PROSITE" id="PS50119">
    <property type="entry name" value="ZF_BBOX"/>
    <property type="match status" value="1"/>
</dbReference>
<dbReference type="PROSITE" id="PS00518">
    <property type="entry name" value="ZF_RING_1"/>
    <property type="match status" value="1"/>
</dbReference>
<dbReference type="PROSITE" id="PS50089">
    <property type="entry name" value="ZF_RING_2"/>
    <property type="match status" value="1"/>
</dbReference>
<gene>
    <name type="primary">TRIM15</name>
    <name type="synonym">ZNFB7</name>
</gene>
<sequence length="461" mass="51578">MPLTPSHKGAVCSDCQGRLEDAVTAACGHTFCRLCLPLPPQMGAQPSSRVLLCPVCQEKEQTEPVLVPVPLGPLGETYCEEHGEKIYFFCENDAEFLCVFCREGPSHQAHAVGFLDEAIQPYRDRLRGRLEALITERDEIEDMKSREDQKLQVLLAQIESKKRHVEATFERLQQELGEQQRLLLARLTELERQIWKERDKYISKLSEEVARLGTQVKELEEKCQQPASELLQDVRVNQSRCETKTFVSPEAISPDLVKKIRDLHRKILTLPEMLRAFSENLVHHLETDSGIVTLDPLTASPSLVLSEDRKSVRYTRQKQNLPDSPLRFEGLPVVLGSPGFSSGRHRWQVEVQLGEGGGCTVGVVGEEVRRKGEQGLSAEEGVWAVILSHQQCWASTSPGTDLPLSEIPRRVGVALDYEAGRVALLNAETRAPIFTFAASFSGKVFPFFAVWKKGSCLTLKG</sequence>
<proteinExistence type="inferred from homology"/>
<name>TRI15_PIG</name>
<protein>
    <recommendedName>
        <fullName>E3 ubiquitin-protein ligase TRIM15</fullName>
        <ecNumber evidence="1">2.3.2.27</ecNumber>
    </recommendedName>
    <alternativeName>
        <fullName>Zinc finger protein B7</fullName>
    </alternativeName>
</protein>
<feature type="chain" id="PRO_0000056221" description="E3 ubiquitin-protein ligase TRIM15">
    <location>
        <begin position="1"/>
        <end position="461"/>
    </location>
</feature>
<feature type="domain" description="B30.2/SPRY" evidence="5">
    <location>
        <begin position="272"/>
        <end position="461"/>
    </location>
</feature>
<feature type="zinc finger region" description="RING-type" evidence="4">
    <location>
        <begin position="12"/>
        <end position="57"/>
    </location>
</feature>
<feature type="zinc finger region" description="B box-type" evidence="3">
    <location>
        <begin position="74"/>
        <end position="115"/>
    </location>
</feature>
<feature type="coiled-coil region" evidence="2">
    <location>
        <begin position="123"/>
        <end position="230"/>
    </location>
</feature>
<feature type="binding site" evidence="3">
    <location>
        <position position="79"/>
    </location>
    <ligand>
        <name>Zn(2+)</name>
        <dbReference type="ChEBI" id="CHEBI:29105"/>
    </ligand>
</feature>
<feature type="binding site" evidence="3">
    <location>
        <position position="82"/>
    </location>
    <ligand>
        <name>Zn(2+)</name>
        <dbReference type="ChEBI" id="CHEBI:29105"/>
    </ligand>
</feature>
<feature type="binding site" evidence="3">
    <location>
        <position position="101"/>
    </location>
    <ligand>
        <name>Zn(2+)</name>
        <dbReference type="ChEBI" id="CHEBI:29105"/>
    </ligand>
</feature>
<feature type="binding site" evidence="3">
    <location>
        <position position="107"/>
    </location>
    <ligand>
        <name>Zn(2+)</name>
        <dbReference type="ChEBI" id="CHEBI:29105"/>
    </ligand>
</feature>
<organism>
    <name type="scientific">Sus scrofa</name>
    <name type="common">Pig</name>
    <dbReference type="NCBI Taxonomy" id="9823"/>
    <lineage>
        <taxon>Eukaryota</taxon>
        <taxon>Metazoa</taxon>
        <taxon>Chordata</taxon>
        <taxon>Craniata</taxon>
        <taxon>Vertebrata</taxon>
        <taxon>Euteleostomi</taxon>
        <taxon>Mammalia</taxon>
        <taxon>Eutheria</taxon>
        <taxon>Laurasiatheria</taxon>
        <taxon>Artiodactyla</taxon>
        <taxon>Suina</taxon>
        <taxon>Suidae</taxon>
        <taxon>Sus</taxon>
    </lineage>
</organism>
<reference key="1">
    <citation type="journal article" date="2001" name="Immunogenetics">
        <title>Sequence of the pig major histocompatibility region containing the classical class I genes.</title>
        <authorList>
            <person name="Renard C."/>
            <person name="Vaiman M."/>
            <person name="Chiannilkulchai N."/>
            <person name="Cattolico L."/>
            <person name="Robert C."/>
            <person name="Chardon P."/>
        </authorList>
    </citation>
    <scope>NUCLEOTIDE SEQUENCE [GENOMIC DNA]</scope>
    <source>
        <strain>Large white</strain>
    </source>
</reference>
<keyword id="KW-0965">Cell junction</keyword>
<keyword id="KW-0175">Coiled coil</keyword>
<keyword id="KW-0963">Cytoplasm</keyword>
<keyword id="KW-0479">Metal-binding</keyword>
<keyword id="KW-0539">Nucleus</keyword>
<keyword id="KW-1185">Reference proteome</keyword>
<keyword id="KW-0808">Transferase</keyword>
<keyword id="KW-0833">Ubl conjugation pathway</keyword>
<keyword id="KW-0862">Zinc</keyword>
<keyword id="KW-0863">Zinc-finger</keyword>
<accession>Q9TSW0</accession>